<evidence type="ECO:0000255" key="1">
    <source>
        <dbReference type="HAMAP-Rule" id="MF_00459"/>
    </source>
</evidence>
<comment type="function">
    <text evidence="1">Part of a membrane-bound complex that couples electron transfer with translocation of ions across the membrane.</text>
</comment>
<comment type="subunit">
    <text evidence="1">The complex is composed of six subunits: RnfA, RnfB, RnfC, RnfD, RnfE and RnfG.</text>
</comment>
<comment type="subcellular location">
    <subcellularLocation>
        <location evidence="1">Cell inner membrane</location>
        <topology evidence="1">Multi-pass membrane protein</topology>
    </subcellularLocation>
</comment>
<comment type="similarity">
    <text evidence="1">Belongs to the NqrDE/RnfAE family.</text>
</comment>
<dbReference type="EC" id="7.-.-.-" evidence="1"/>
<dbReference type="EMBL" id="CP000947">
    <property type="protein sequence ID" value="ACA31300.1"/>
    <property type="molecule type" value="Genomic_DNA"/>
</dbReference>
<dbReference type="RefSeq" id="WP_012340683.1">
    <property type="nucleotide sequence ID" value="NC_010519.1"/>
</dbReference>
<dbReference type="SMR" id="B0UUS0"/>
<dbReference type="STRING" id="228400.HSM_1543"/>
<dbReference type="GeneID" id="31487846"/>
<dbReference type="KEGG" id="hsm:HSM_1543"/>
<dbReference type="HOGENOM" id="CLU_095255_1_0_6"/>
<dbReference type="GO" id="GO:0005886">
    <property type="term" value="C:plasma membrane"/>
    <property type="evidence" value="ECO:0007669"/>
    <property type="project" value="UniProtKB-SubCell"/>
</dbReference>
<dbReference type="GO" id="GO:0022900">
    <property type="term" value="P:electron transport chain"/>
    <property type="evidence" value="ECO:0007669"/>
    <property type="project" value="UniProtKB-UniRule"/>
</dbReference>
<dbReference type="HAMAP" id="MF_00459">
    <property type="entry name" value="RsxA_RnfA"/>
    <property type="match status" value="1"/>
</dbReference>
<dbReference type="InterPro" id="IPR011293">
    <property type="entry name" value="Ion_transpt_RnfA/RsxA"/>
</dbReference>
<dbReference type="InterPro" id="IPR003667">
    <property type="entry name" value="NqrDE/RnfAE"/>
</dbReference>
<dbReference type="InterPro" id="IPR050133">
    <property type="entry name" value="NqrDE/RnfAE_oxidrdctase"/>
</dbReference>
<dbReference type="NCBIfam" id="NF003481">
    <property type="entry name" value="PRK05151.1"/>
    <property type="match status" value="1"/>
</dbReference>
<dbReference type="NCBIfam" id="TIGR01943">
    <property type="entry name" value="rnfA"/>
    <property type="match status" value="1"/>
</dbReference>
<dbReference type="PANTHER" id="PTHR30335">
    <property type="entry name" value="INTEGRAL MEMBRANE PROTEIN OF SOXR-REDUCING COMPLEX"/>
    <property type="match status" value="1"/>
</dbReference>
<dbReference type="PANTHER" id="PTHR30335:SF0">
    <property type="entry name" value="ION-TRANSLOCATING OXIDOREDUCTASE COMPLEX SUBUNIT A"/>
    <property type="match status" value="1"/>
</dbReference>
<dbReference type="Pfam" id="PF02508">
    <property type="entry name" value="Rnf-Nqr"/>
    <property type="match status" value="1"/>
</dbReference>
<dbReference type="PIRSF" id="PIRSF006102">
    <property type="entry name" value="NQR_DE"/>
    <property type="match status" value="1"/>
</dbReference>
<keyword id="KW-0997">Cell inner membrane</keyword>
<keyword id="KW-1003">Cell membrane</keyword>
<keyword id="KW-0249">Electron transport</keyword>
<keyword id="KW-0472">Membrane</keyword>
<keyword id="KW-1278">Translocase</keyword>
<keyword id="KW-0812">Transmembrane</keyword>
<keyword id="KW-1133">Transmembrane helix</keyword>
<keyword id="KW-0813">Transport</keyword>
<feature type="chain" id="PRO_1000191727" description="Ion-translocating oxidoreductase complex subunit A">
    <location>
        <begin position="1"/>
        <end position="193"/>
    </location>
</feature>
<feature type="transmembrane region" description="Helical" evidence="1">
    <location>
        <begin position="5"/>
        <end position="25"/>
    </location>
</feature>
<feature type="transmembrane region" description="Helical" evidence="1">
    <location>
        <begin position="39"/>
        <end position="59"/>
    </location>
</feature>
<feature type="transmembrane region" description="Helical" evidence="1">
    <location>
        <begin position="72"/>
        <end position="92"/>
    </location>
</feature>
<feature type="transmembrane region" description="Helical" evidence="1">
    <location>
        <begin position="102"/>
        <end position="122"/>
    </location>
</feature>
<feature type="transmembrane region" description="Helical" evidence="1">
    <location>
        <begin position="134"/>
        <end position="154"/>
    </location>
</feature>
<feature type="transmembrane region" description="Helical" evidence="1">
    <location>
        <begin position="171"/>
        <end position="191"/>
    </location>
</feature>
<organism>
    <name type="scientific">Histophilus somni (strain 2336)</name>
    <name type="common">Haemophilus somnus</name>
    <dbReference type="NCBI Taxonomy" id="228400"/>
    <lineage>
        <taxon>Bacteria</taxon>
        <taxon>Pseudomonadati</taxon>
        <taxon>Pseudomonadota</taxon>
        <taxon>Gammaproteobacteria</taxon>
        <taxon>Pasteurellales</taxon>
        <taxon>Pasteurellaceae</taxon>
        <taxon>Histophilus</taxon>
    </lineage>
</organism>
<accession>B0UUS0</accession>
<protein>
    <recommendedName>
        <fullName evidence="1">Ion-translocating oxidoreductase complex subunit A</fullName>
        <ecNumber evidence="1">7.-.-.-</ecNumber>
    </recommendedName>
    <alternativeName>
        <fullName evidence="1">Rnf electron transport complex subunit A</fullName>
    </alternativeName>
</protein>
<reference key="1">
    <citation type="submission" date="2008-02" db="EMBL/GenBank/DDBJ databases">
        <title>Complete sequence of Haemophilus somnus 2336.</title>
        <authorList>
            <consortium name="US DOE Joint Genome Institute"/>
            <person name="Siddaramappa S."/>
            <person name="Duncan A.J."/>
            <person name="Challacombe J.F."/>
            <person name="Rainey D."/>
            <person name="Gillaspy A.F."/>
            <person name="Carson M."/>
            <person name="Gipson J."/>
            <person name="Gipson M."/>
            <person name="Bruce D."/>
            <person name="Detter J.C."/>
            <person name="Han C.S."/>
            <person name="Land M."/>
            <person name="Tapia R."/>
            <person name="Thompson L.S."/>
            <person name="Orvis J."/>
            <person name="Zaitshik J."/>
            <person name="Barnes G."/>
            <person name="Brettin T.S."/>
            <person name="Dyer D.W."/>
            <person name="Inzana T.J."/>
        </authorList>
    </citation>
    <scope>NUCLEOTIDE SEQUENCE [LARGE SCALE GENOMIC DNA]</scope>
    <source>
        <strain>2336</strain>
    </source>
</reference>
<sequence length="193" mass="20940">MIDYILLIISTALINNFVLVKFLGLCPFMGVSKKIETAIGMGLATMFVLTVASLCAYLVERYLLTPLHANFLRTLIFILVIAVVVQFTEMVIHKTSPTLYRLLGIFLPLITTNCAVLGVALLNINLAHNLTQSVIYGFSASLGFSLVLVLFAALRERLTAADIPLPFRGASIALITAGLMSLAFMGFSGLVRV</sequence>
<gene>
    <name evidence="1" type="primary">rnfA</name>
    <name type="ordered locus">HSM_1543</name>
</gene>
<proteinExistence type="inferred from homology"/>
<name>RNFA_HISS2</name>